<feature type="chain" id="PRO_1000074804" description="UPF0102 protein BCAN_A0183">
    <location>
        <begin position="1"/>
        <end position="126"/>
    </location>
</feature>
<sequence length="126" mass="14582">MTDLREKKRIAFFRGHSAERLAAFALMLKGFRIVARRYRTRLGEIDLIARRGDLVLIVEVKARASFEAAQFAVTPQAMRRIEAAADLWLQRQTDRARLSLRFDMVAVLPRRWPKHVPAFFTAGHYG</sequence>
<comment type="similarity">
    <text evidence="1">Belongs to the UPF0102 family.</text>
</comment>
<evidence type="ECO:0000255" key="1">
    <source>
        <dbReference type="HAMAP-Rule" id="MF_00048"/>
    </source>
</evidence>
<proteinExistence type="inferred from homology"/>
<organism>
    <name type="scientific">Brucella canis (strain ATCC 23365 / NCTC 10854 / RM-666)</name>
    <dbReference type="NCBI Taxonomy" id="483179"/>
    <lineage>
        <taxon>Bacteria</taxon>
        <taxon>Pseudomonadati</taxon>
        <taxon>Pseudomonadota</taxon>
        <taxon>Alphaproteobacteria</taxon>
        <taxon>Hyphomicrobiales</taxon>
        <taxon>Brucellaceae</taxon>
        <taxon>Brucella/Ochrobactrum group</taxon>
        <taxon>Brucella</taxon>
    </lineage>
</organism>
<accession>A9M7C3</accession>
<keyword id="KW-1185">Reference proteome</keyword>
<gene>
    <name type="ordered locus">BCAN_A0183</name>
</gene>
<name>Y183_BRUC2</name>
<protein>
    <recommendedName>
        <fullName evidence="1">UPF0102 protein BCAN_A0183</fullName>
    </recommendedName>
</protein>
<reference key="1">
    <citation type="submission" date="2007-10" db="EMBL/GenBank/DDBJ databases">
        <title>Brucella canis ATCC 23365 whole genome shotgun sequencing project.</title>
        <authorList>
            <person name="Setubal J.C."/>
            <person name="Bowns C."/>
            <person name="Boyle S."/>
            <person name="Crasta O.R."/>
            <person name="Czar M.J."/>
            <person name="Dharmanolla C."/>
            <person name="Gillespie J.J."/>
            <person name="Kenyon R.W."/>
            <person name="Lu J."/>
            <person name="Mane S."/>
            <person name="Mohapatra S."/>
            <person name="Nagrani S."/>
            <person name="Purkayastha A."/>
            <person name="Rajasimha H.K."/>
            <person name="Shallom J.M."/>
            <person name="Shallom S."/>
            <person name="Shukla M."/>
            <person name="Snyder E.E."/>
            <person name="Sobral B.W."/>
            <person name="Wattam A.R."/>
            <person name="Will R."/>
            <person name="Williams K."/>
            <person name="Yoo H."/>
            <person name="Bruce D."/>
            <person name="Detter C."/>
            <person name="Munk C."/>
            <person name="Brettin T.S."/>
        </authorList>
    </citation>
    <scope>NUCLEOTIDE SEQUENCE [LARGE SCALE GENOMIC DNA]</scope>
    <source>
        <strain>ATCC 23365 / NCTC 10854 / RM-666</strain>
    </source>
</reference>
<dbReference type="EMBL" id="CP000872">
    <property type="protein sequence ID" value="ABX61282.1"/>
    <property type="molecule type" value="Genomic_DNA"/>
</dbReference>
<dbReference type="RefSeq" id="WP_002965427.1">
    <property type="nucleotide sequence ID" value="NC_010103.1"/>
</dbReference>
<dbReference type="SMR" id="A9M7C3"/>
<dbReference type="KEGG" id="bcs:BCAN_A0183"/>
<dbReference type="HOGENOM" id="CLU_115353_0_2_5"/>
<dbReference type="PhylomeDB" id="A9M7C3"/>
<dbReference type="Proteomes" id="UP000001385">
    <property type="component" value="Chromosome I"/>
</dbReference>
<dbReference type="GO" id="GO:0003676">
    <property type="term" value="F:nucleic acid binding"/>
    <property type="evidence" value="ECO:0007669"/>
    <property type="project" value="InterPro"/>
</dbReference>
<dbReference type="Gene3D" id="3.40.1350.10">
    <property type="match status" value="1"/>
</dbReference>
<dbReference type="HAMAP" id="MF_00048">
    <property type="entry name" value="UPF0102"/>
    <property type="match status" value="1"/>
</dbReference>
<dbReference type="InterPro" id="IPR011335">
    <property type="entry name" value="Restrct_endonuc-II-like"/>
</dbReference>
<dbReference type="InterPro" id="IPR011856">
    <property type="entry name" value="tRNA_endonuc-like_dom_sf"/>
</dbReference>
<dbReference type="InterPro" id="IPR003509">
    <property type="entry name" value="UPF0102_YraN-like"/>
</dbReference>
<dbReference type="NCBIfam" id="NF009151">
    <property type="entry name" value="PRK12497.1-5"/>
    <property type="match status" value="1"/>
</dbReference>
<dbReference type="PANTHER" id="PTHR34039">
    <property type="entry name" value="UPF0102 PROTEIN YRAN"/>
    <property type="match status" value="1"/>
</dbReference>
<dbReference type="PANTHER" id="PTHR34039:SF1">
    <property type="entry name" value="UPF0102 PROTEIN YRAN"/>
    <property type="match status" value="1"/>
</dbReference>
<dbReference type="Pfam" id="PF02021">
    <property type="entry name" value="UPF0102"/>
    <property type="match status" value="1"/>
</dbReference>
<dbReference type="SUPFAM" id="SSF52980">
    <property type="entry name" value="Restriction endonuclease-like"/>
    <property type="match status" value="1"/>
</dbReference>